<comment type="function">
    <text evidence="1">Cell wall formation. Adds enolpyruvyl to UDP-N-acetylglucosamine.</text>
</comment>
<comment type="catalytic activity">
    <reaction evidence="1">
        <text>phosphoenolpyruvate + UDP-N-acetyl-alpha-D-glucosamine = UDP-N-acetyl-3-O-(1-carboxyvinyl)-alpha-D-glucosamine + phosphate</text>
        <dbReference type="Rhea" id="RHEA:18681"/>
        <dbReference type="ChEBI" id="CHEBI:43474"/>
        <dbReference type="ChEBI" id="CHEBI:57705"/>
        <dbReference type="ChEBI" id="CHEBI:58702"/>
        <dbReference type="ChEBI" id="CHEBI:68483"/>
        <dbReference type="EC" id="2.5.1.7"/>
    </reaction>
</comment>
<comment type="pathway">
    <text evidence="1">Cell wall biogenesis; peptidoglycan biosynthesis.</text>
</comment>
<comment type="subcellular location">
    <subcellularLocation>
        <location evidence="1">Cytoplasm</location>
    </subcellularLocation>
</comment>
<comment type="similarity">
    <text evidence="1">Belongs to the EPSP synthase family. MurA subfamily.</text>
</comment>
<keyword id="KW-0131">Cell cycle</keyword>
<keyword id="KW-0132">Cell division</keyword>
<keyword id="KW-0133">Cell shape</keyword>
<keyword id="KW-0961">Cell wall biogenesis/degradation</keyword>
<keyword id="KW-0963">Cytoplasm</keyword>
<keyword id="KW-0573">Peptidoglycan synthesis</keyword>
<keyword id="KW-0670">Pyruvate</keyword>
<keyword id="KW-0808">Transferase</keyword>
<accession>A9NDE8</accession>
<organism>
    <name type="scientific">Coxiella burnetii (strain RSA 331 / Henzerling II)</name>
    <dbReference type="NCBI Taxonomy" id="360115"/>
    <lineage>
        <taxon>Bacteria</taxon>
        <taxon>Pseudomonadati</taxon>
        <taxon>Pseudomonadota</taxon>
        <taxon>Gammaproteobacteria</taxon>
        <taxon>Legionellales</taxon>
        <taxon>Coxiellaceae</taxon>
        <taxon>Coxiella</taxon>
    </lineage>
</organism>
<gene>
    <name evidence="1" type="primary">murA</name>
    <name type="ordered locus">COXBURSA331_A1201</name>
</gene>
<sequence>MDKLIIVGGVPLNGSIRISGAKNAVLPILAATLLIEEPVILSNIPHLNDVTTMIELLGRMGAQITIDERMSIEVDCSQIQNVHASYELVKTMRASILVLGPLLSRFGKAEVSLPGGCAIGSRPVDVHIDGMRALGADIELVDGFIHATVEGRLKGAELNLGKITVTGTENLIMAATLAEGQTIIHNAACEPEVQDLANFLNKMGARISGAGTDTIVIDGVDRLSGGSYSILPDRIEAGTYLVAAAMTRGHVRIRDVFPKTLGAVLEKLHEAGARVKIGENWVDLDMQGRRAKAVDIVTAPYPEMPTDMQAQFMALNVVAEGQAVITETVFENRFMHVHELQRMGADIKLQGSKALIRGKEKLTGAPVMATDLRASAGLVLAGLMARGNTIVDRIYHIDRGYECIEEKLAQLGAEIRRVSSHVYAARYAAQKRWL</sequence>
<name>MURA_COXBR</name>
<dbReference type="EC" id="2.5.1.7" evidence="1"/>
<dbReference type="EMBL" id="CP000890">
    <property type="protein sequence ID" value="ABX78184.1"/>
    <property type="molecule type" value="Genomic_DNA"/>
</dbReference>
<dbReference type="RefSeq" id="WP_005771755.1">
    <property type="nucleotide sequence ID" value="NC_010117.1"/>
</dbReference>
<dbReference type="SMR" id="A9NDE8"/>
<dbReference type="KEGG" id="cbs:COXBURSA331_A1201"/>
<dbReference type="HOGENOM" id="CLU_027387_0_0_6"/>
<dbReference type="UniPathway" id="UPA00219"/>
<dbReference type="GO" id="GO:0005737">
    <property type="term" value="C:cytoplasm"/>
    <property type="evidence" value="ECO:0007669"/>
    <property type="project" value="UniProtKB-SubCell"/>
</dbReference>
<dbReference type="GO" id="GO:0008760">
    <property type="term" value="F:UDP-N-acetylglucosamine 1-carboxyvinyltransferase activity"/>
    <property type="evidence" value="ECO:0007669"/>
    <property type="project" value="UniProtKB-UniRule"/>
</dbReference>
<dbReference type="GO" id="GO:0051301">
    <property type="term" value="P:cell division"/>
    <property type="evidence" value="ECO:0007669"/>
    <property type="project" value="UniProtKB-KW"/>
</dbReference>
<dbReference type="GO" id="GO:0071555">
    <property type="term" value="P:cell wall organization"/>
    <property type="evidence" value="ECO:0007669"/>
    <property type="project" value="UniProtKB-KW"/>
</dbReference>
<dbReference type="GO" id="GO:0009252">
    <property type="term" value="P:peptidoglycan biosynthetic process"/>
    <property type="evidence" value="ECO:0007669"/>
    <property type="project" value="UniProtKB-UniRule"/>
</dbReference>
<dbReference type="GO" id="GO:0008360">
    <property type="term" value="P:regulation of cell shape"/>
    <property type="evidence" value="ECO:0007669"/>
    <property type="project" value="UniProtKB-KW"/>
</dbReference>
<dbReference type="GO" id="GO:0019277">
    <property type="term" value="P:UDP-N-acetylgalactosamine biosynthetic process"/>
    <property type="evidence" value="ECO:0007669"/>
    <property type="project" value="InterPro"/>
</dbReference>
<dbReference type="CDD" id="cd01555">
    <property type="entry name" value="UdpNAET"/>
    <property type="match status" value="1"/>
</dbReference>
<dbReference type="FunFam" id="3.65.10.10:FF:000001">
    <property type="entry name" value="UDP-N-acetylglucosamine 1-carboxyvinyltransferase"/>
    <property type="match status" value="1"/>
</dbReference>
<dbReference type="FunFam" id="3.65.10.10:FF:000002">
    <property type="entry name" value="UDP-N-acetylglucosamine 1-carboxyvinyltransferase"/>
    <property type="match status" value="1"/>
</dbReference>
<dbReference type="Gene3D" id="3.65.10.10">
    <property type="entry name" value="Enolpyruvate transferase domain"/>
    <property type="match status" value="2"/>
</dbReference>
<dbReference type="HAMAP" id="MF_00111">
    <property type="entry name" value="MurA"/>
    <property type="match status" value="1"/>
</dbReference>
<dbReference type="InterPro" id="IPR001986">
    <property type="entry name" value="Enolpyruvate_Tfrase_dom"/>
</dbReference>
<dbReference type="InterPro" id="IPR036968">
    <property type="entry name" value="Enolpyruvate_Tfrase_sf"/>
</dbReference>
<dbReference type="InterPro" id="IPR050068">
    <property type="entry name" value="MurA_subfamily"/>
</dbReference>
<dbReference type="InterPro" id="IPR013792">
    <property type="entry name" value="RNA3'P_cycl/enolpyr_Trfase_a/b"/>
</dbReference>
<dbReference type="InterPro" id="IPR005750">
    <property type="entry name" value="UDP_GlcNAc_COvinyl_MurA"/>
</dbReference>
<dbReference type="NCBIfam" id="TIGR01072">
    <property type="entry name" value="murA"/>
    <property type="match status" value="1"/>
</dbReference>
<dbReference type="NCBIfam" id="NF006873">
    <property type="entry name" value="PRK09369.1"/>
    <property type="match status" value="1"/>
</dbReference>
<dbReference type="PANTHER" id="PTHR43783">
    <property type="entry name" value="UDP-N-ACETYLGLUCOSAMINE 1-CARBOXYVINYLTRANSFERASE"/>
    <property type="match status" value="1"/>
</dbReference>
<dbReference type="PANTHER" id="PTHR43783:SF1">
    <property type="entry name" value="UDP-N-ACETYLGLUCOSAMINE 1-CARBOXYVINYLTRANSFERASE"/>
    <property type="match status" value="1"/>
</dbReference>
<dbReference type="Pfam" id="PF00275">
    <property type="entry name" value="EPSP_synthase"/>
    <property type="match status" value="1"/>
</dbReference>
<dbReference type="SUPFAM" id="SSF55205">
    <property type="entry name" value="EPT/RTPC-like"/>
    <property type="match status" value="1"/>
</dbReference>
<reference key="1">
    <citation type="submission" date="2007-11" db="EMBL/GenBank/DDBJ databases">
        <title>Genome sequencing of phylogenetically and phenotypically diverse Coxiella burnetii isolates.</title>
        <authorList>
            <person name="Seshadri R."/>
            <person name="Samuel J.E."/>
        </authorList>
    </citation>
    <scope>NUCLEOTIDE SEQUENCE [LARGE SCALE GENOMIC DNA]</scope>
    <source>
        <strain>RSA 331 / Henzerling II</strain>
    </source>
</reference>
<protein>
    <recommendedName>
        <fullName evidence="1">UDP-N-acetylglucosamine 1-carboxyvinyltransferase</fullName>
        <ecNumber evidence="1">2.5.1.7</ecNumber>
    </recommendedName>
    <alternativeName>
        <fullName evidence="1">Enoylpyruvate transferase</fullName>
    </alternativeName>
    <alternativeName>
        <fullName evidence="1">UDP-N-acetylglucosamine enolpyruvyl transferase</fullName>
        <shortName evidence="1">EPT</shortName>
    </alternativeName>
</protein>
<feature type="chain" id="PRO_1000075968" description="UDP-N-acetylglucosamine 1-carboxyvinyltransferase">
    <location>
        <begin position="1"/>
        <end position="434"/>
    </location>
</feature>
<feature type="active site" description="Proton donor" evidence="1">
    <location>
        <position position="117"/>
    </location>
</feature>
<feature type="binding site" evidence="1">
    <location>
        <begin position="22"/>
        <end position="23"/>
    </location>
    <ligand>
        <name>phosphoenolpyruvate</name>
        <dbReference type="ChEBI" id="CHEBI:58702"/>
    </ligand>
</feature>
<feature type="binding site" evidence="1">
    <location>
        <position position="93"/>
    </location>
    <ligand>
        <name>UDP-N-acetyl-alpha-D-glucosamine</name>
        <dbReference type="ChEBI" id="CHEBI:57705"/>
    </ligand>
</feature>
<feature type="binding site" evidence="1">
    <location>
        <position position="307"/>
    </location>
    <ligand>
        <name>UDP-N-acetyl-alpha-D-glucosamine</name>
        <dbReference type="ChEBI" id="CHEBI:57705"/>
    </ligand>
</feature>
<feature type="binding site" evidence="1">
    <location>
        <position position="329"/>
    </location>
    <ligand>
        <name>UDP-N-acetyl-alpha-D-glucosamine</name>
        <dbReference type="ChEBI" id="CHEBI:57705"/>
    </ligand>
</feature>
<feature type="modified residue" description="2-(S-cysteinyl)pyruvic acid O-phosphothioketal" evidence="1">
    <location>
        <position position="117"/>
    </location>
</feature>
<evidence type="ECO:0000255" key="1">
    <source>
        <dbReference type="HAMAP-Rule" id="MF_00111"/>
    </source>
</evidence>
<proteinExistence type="inferred from homology"/>